<evidence type="ECO:0000255" key="1">
    <source>
        <dbReference type="HAMAP-Rule" id="MF_00580"/>
    </source>
</evidence>
<gene>
    <name evidence="1" type="primary">groES</name>
    <name evidence="1" type="synonym">groS</name>
    <name type="ordered locus">Sez_0145</name>
</gene>
<sequence length="95" mass="9949">MLKPLGDRVVLKFEAEKEQTVGGFVLAASHKEATKVGTVVAVSETGIRTITGDIVPPSVAVGDKVLVEYGSGLEVKDGDQELVICREADILAVLA</sequence>
<feature type="chain" id="PRO_1000129708" description="Co-chaperonin GroES">
    <location>
        <begin position="1"/>
        <end position="95"/>
    </location>
</feature>
<accession>B4U080</accession>
<protein>
    <recommendedName>
        <fullName evidence="1">Co-chaperonin GroES</fullName>
    </recommendedName>
    <alternativeName>
        <fullName evidence="1">10 kDa chaperonin</fullName>
    </alternativeName>
    <alternativeName>
        <fullName evidence="1">Chaperonin-10</fullName>
        <shortName evidence="1">Cpn10</shortName>
    </alternativeName>
</protein>
<organism>
    <name type="scientific">Streptococcus equi subsp. zooepidemicus (strain MGCS10565)</name>
    <dbReference type="NCBI Taxonomy" id="552526"/>
    <lineage>
        <taxon>Bacteria</taxon>
        <taxon>Bacillati</taxon>
        <taxon>Bacillota</taxon>
        <taxon>Bacilli</taxon>
        <taxon>Lactobacillales</taxon>
        <taxon>Streptococcaceae</taxon>
        <taxon>Streptococcus</taxon>
    </lineage>
</organism>
<comment type="function">
    <text evidence="1">Together with the chaperonin GroEL, plays an essential role in assisting protein folding. The GroEL-GroES system forms a nano-cage that allows encapsulation of the non-native substrate proteins and provides a physical environment optimized to promote and accelerate protein folding. GroES binds to the apical surface of the GroEL ring, thereby capping the opening of the GroEL channel.</text>
</comment>
<comment type="subunit">
    <text evidence="1">Heptamer of 7 subunits arranged in a ring. Interacts with the chaperonin GroEL.</text>
</comment>
<comment type="subcellular location">
    <subcellularLocation>
        <location evidence="1">Cytoplasm</location>
    </subcellularLocation>
</comment>
<comment type="similarity">
    <text evidence="1">Belongs to the GroES chaperonin family.</text>
</comment>
<reference key="1">
    <citation type="journal article" date="2008" name="PLoS ONE">
        <title>Genome sequence of a lancefield group C Streptococcus zooepidemicus strain causing epidemic nephritis: new information about an old disease.</title>
        <authorList>
            <person name="Beres S.B."/>
            <person name="Sesso R."/>
            <person name="Pinto S.W.L."/>
            <person name="Hoe N.P."/>
            <person name="Porcella S.F."/>
            <person name="Deleo F.R."/>
            <person name="Musser J.M."/>
        </authorList>
    </citation>
    <scope>NUCLEOTIDE SEQUENCE [LARGE SCALE GENOMIC DNA]</scope>
    <source>
        <strain>MGCS10565</strain>
    </source>
</reference>
<keyword id="KW-0143">Chaperone</keyword>
<keyword id="KW-0963">Cytoplasm</keyword>
<keyword id="KW-0346">Stress response</keyword>
<proteinExistence type="inferred from homology"/>
<dbReference type="EMBL" id="CP001129">
    <property type="protein sequence ID" value="ACG61523.1"/>
    <property type="molecule type" value="Genomic_DNA"/>
</dbReference>
<dbReference type="RefSeq" id="WP_012514806.1">
    <property type="nucleotide sequence ID" value="NC_011134.1"/>
</dbReference>
<dbReference type="SMR" id="B4U080"/>
<dbReference type="GeneID" id="83704009"/>
<dbReference type="KEGG" id="sez:Sez_0145"/>
<dbReference type="HOGENOM" id="CLU_132825_1_2_9"/>
<dbReference type="Proteomes" id="UP000001873">
    <property type="component" value="Chromosome"/>
</dbReference>
<dbReference type="GO" id="GO:0005737">
    <property type="term" value="C:cytoplasm"/>
    <property type="evidence" value="ECO:0007669"/>
    <property type="project" value="UniProtKB-SubCell"/>
</dbReference>
<dbReference type="GO" id="GO:0005524">
    <property type="term" value="F:ATP binding"/>
    <property type="evidence" value="ECO:0007669"/>
    <property type="project" value="InterPro"/>
</dbReference>
<dbReference type="GO" id="GO:0046872">
    <property type="term" value="F:metal ion binding"/>
    <property type="evidence" value="ECO:0007669"/>
    <property type="project" value="TreeGrafter"/>
</dbReference>
<dbReference type="GO" id="GO:0044183">
    <property type="term" value="F:protein folding chaperone"/>
    <property type="evidence" value="ECO:0007669"/>
    <property type="project" value="InterPro"/>
</dbReference>
<dbReference type="GO" id="GO:0051087">
    <property type="term" value="F:protein-folding chaperone binding"/>
    <property type="evidence" value="ECO:0007669"/>
    <property type="project" value="TreeGrafter"/>
</dbReference>
<dbReference type="GO" id="GO:0051082">
    <property type="term" value="F:unfolded protein binding"/>
    <property type="evidence" value="ECO:0007669"/>
    <property type="project" value="TreeGrafter"/>
</dbReference>
<dbReference type="GO" id="GO:0051085">
    <property type="term" value="P:chaperone cofactor-dependent protein refolding"/>
    <property type="evidence" value="ECO:0007669"/>
    <property type="project" value="TreeGrafter"/>
</dbReference>
<dbReference type="CDD" id="cd00320">
    <property type="entry name" value="cpn10"/>
    <property type="match status" value="1"/>
</dbReference>
<dbReference type="FunFam" id="2.30.33.40:FF:000001">
    <property type="entry name" value="10 kDa chaperonin"/>
    <property type="match status" value="1"/>
</dbReference>
<dbReference type="Gene3D" id="2.30.33.40">
    <property type="entry name" value="GroES chaperonin"/>
    <property type="match status" value="1"/>
</dbReference>
<dbReference type="HAMAP" id="MF_00580">
    <property type="entry name" value="CH10"/>
    <property type="match status" value="1"/>
</dbReference>
<dbReference type="InterPro" id="IPR020818">
    <property type="entry name" value="Chaperonin_GroES"/>
</dbReference>
<dbReference type="InterPro" id="IPR037124">
    <property type="entry name" value="Chaperonin_GroES_sf"/>
</dbReference>
<dbReference type="InterPro" id="IPR018369">
    <property type="entry name" value="Chaprnonin_Cpn10_CS"/>
</dbReference>
<dbReference type="InterPro" id="IPR011032">
    <property type="entry name" value="GroES-like_sf"/>
</dbReference>
<dbReference type="NCBIfam" id="NF001528">
    <property type="entry name" value="PRK00364.1-4"/>
    <property type="match status" value="1"/>
</dbReference>
<dbReference type="PANTHER" id="PTHR10772">
    <property type="entry name" value="10 KDA HEAT SHOCK PROTEIN"/>
    <property type="match status" value="1"/>
</dbReference>
<dbReference type="PANTHER" id="PTHR10772:SF58">
    <property type="entry name" value="CO-CHAPERONIN GROES"/>
    <property type="match status" value="1"/>
</dbReference>
<dbReference type="Pfam" id="PF00166">
    <property type="entry name" value="Cpn10"/>
    <property type="match status" value="1"/>
</dbReference>
<dbReference type="PRINTS" id="PR00297">
    <property type="entry name" value="CHAPERONIN10"/>
</dbReference>
<dbReference type="SMART" id="SM00883">
    <property type="entry name" value="Cpn10"/>
    <property type="match status" value="1"/>
</dbReference>
<dbReference type="SUPFAM" id="SSF50129">
    <property type="entry name" value="GroES-like"/>
    <property type="match status" value="1"/>
</dbReference>
<dbReference type="PROSITE" id="PS00681">
    <property type="entry name" value="CHAPERONINS_CPN10"/>
    <property type="match status" value="1"/>
</dbReference>
<name>CH10_STREM</name>